<gene>
    <name type="ordered locus">Rv1352</name>
    <name type="ORF">MTCY02B10.16</name>
</gene>
<name>Y1352_MYCTU</name>
<sequence>MARTLALRASAGLVAGMAMAAITLAPGARAETGEQFPGDGVFLVGTDIAPGTYRTEGPSNPLILVFGRVSELSTCSWSTHSAPEVSNENIVDTNTSMGPMSVVIPPTVAAFQTHNCKLWMRIS</sequence>
<dbReference type="EMBL" id="AL123456">
    <property type="protein sequence ID" value="CCP44110.1"/>
    <property type="molecule type" value="Genomic_DNA"/>
</dbReference>
<dbReference type="PIR" id="G70740">
    <property type="entry name" value="G70740"/>
</dbReference>
<dbReference type="RefSeq" id="NP_215868.1">
    <property type="nucleotide sequence ID" value="NC_000962.3"/>
</dbReference>
<dbReference type="RefSeq" id="WP_003406967.1">
    <property type="nucleotide sequence ID" value="NZ_NVQJ01000031.1"/>
</dbReference>
<dbReference type="STRING" id="83332.Rv1352"/>
<dbReference type="PaxDb" id="83332-Rv1352"/>
<dbReference type="DNASU" id="886833"/>
<dbReference type="GeneID" id="886833"/>
<dbReference type="KEGG" id="mtu:Rv1352"/>
<dbReference type="KEGG" id="mtv:RVBD_1352"/>
<dbReference type="TubercuList" id="Rv1352"/>
<dbReference type="eggNOG" id="ENOG5031KX8">
    <property type="taxonomic scope" value="Bacteria"/>
</dbReference>
<dbReference type="InParanoid" id="P9WM15"/>
<dbReference type="OrthoDB" id="166978at2"/>
<dbReference type="PhylomeDB" id="P9WM15"/>
<dbReference type="Proteomes" id="UP000001584">
    <property type="component" value="Chromosome"/>
</dbReference>
<dbReference type="GO" id="GO:0005576">
    <property type="term" value="C:extracellular region"/>
    <property type="evidence" value="ECO:0007005"/>
    <property type="project" value="MTBBASE"/>
</dbReference>
<reference key="1">
    <citation type="journal article" date="1998" name="Nature">
        <title>Deciphering the biology of Mycobacterium tuberculosis from the complete genome sequence.</title>
        <authorList>
            <person name="Cole S.T."/>
            <person name="Brosch R."/>
            <person name="Parkhill J."/>
            <person name="Garnier T."/>
            <person name="Churcher C.M."/>
            <person name="Harris D.E."/>
            <person name="Gordon S.V."/>
            <person name="Eiglmeier K."/>
            <person name="Gas S."/>
            <person name="Barry C.E. III"/>
            <person name="Tekaia F."/>
            <person name="Badcock K."/>
            <person name="Basham D."/>
            <person name="Brown D."/>
            <person name="Chillingworth T."/>
            <person name="Connor R."/>
            <person name="Davies R.M."/>
            <person name="Devlin K."/>
            <person name="Feltwell T."/>
            <person name="Gentles S."/>
            <person name="Hamlin N."/>
            <person name="Holroyd S."/>
            <person name="Hornsby T."/>
            <person name="Jagels K."/>
            <person name="Krogh A."/>
            <person name="McLean J."/>
            <person name="Moule S."/>
            <person name="Murphy L.D."/>
            <person name="Oliver S."/>
            <person name="Osborne J."/>
            <person name="Quail M.A."/>
            <person name="Rajandream M.A."/>
            <person name="Rogers J."/>
            <person name="Rutter S."/>
            <person name="Seeger K."/>
            <person name="Skelton S."/>
            <person name="Squares S."/>
            <person name="Squares R."/>
            <person name="Sulston J.E."/>
            <person name="Taylor K."/>
            <person name="Whitehead S."/>
            <person name="Barrell B.G."/>
        </authorList>
    </citation>
    <scope>NUCLEOTIDE SEQUENCE [LARGE SCALE GENOMIC DNA]</scope>
    <source>
        <strain>ATCC 25618 / H37Rv</strain>
    </source>
</reference>
<reference key="2">
    <citation type="journal article" date="2011" name="Mol. Cell. Proteomics">
        <title>Proteogenomic analysis of Mycobacterium tuberculosis by high resolution mass spectrometry.</title>
        <authorList>
            <person name="Kelkar D.S."/>
            <person name="Kumar D."/>
            <person name="Kumar P."/>
            <person name="Balakrishnan L."/>
            <person name="Muthusamy B."/>
            <person name="Yadav A.K."/>
            <person name="Shrivastava P."/>
            <person name="Marimuthu A."/>
            <person name="Anand S."/>
            <person name="Sundaram H."/>
            <person name="Kingsbury R."/>
            <person name="Harsha H.C."/>
            <person name="Nair B."/>
            <person name="Prasad T.S."/>
            <person name="Chauhan D.S."/>
            <person name="Katoch K."/>
            <person name="Katoch V.M."/>
            <person name="Kumar P."/>
            <person name="Chaerkady R."/>
            <person name="Ramachandran S."/>
            <person name="Dash D."/>
            <person name="Pandey A."/>
        </authorList>
    </citation>
    <scope>IDENTIFICATION BY MASS SPECTROMETRY [LARGE SCALE ANALYSIS]</scope>
    <source>
        <strain>ATCC 25618 / H37Rv</strain>
    </source>
</reference>
<accession>P9WM15</accession>
<accession>L0T809</accession>
<accession>P64823</accession>
<accession>Q11022</accession>
<feature type="signal peptide" evidence="1">
    <location>
        <begin position="1"/>
        <end position="20"/>
    </location>
</feature>
<feature type="chain" id="PRO_0000014097" description="Uncharacterized protein Rv1352">
    <location>
        <begin position="21"/>
        <end position="123"/>
    </location>
</feature>
<protein>
    <recommendedName>
        <fullName>Uncharacterized protein Rv1352</fullName>
    </recommendedName>
</protein>
<organism>
    <name type="scientific">Mycobacterium tuberculosis (strain ATCC 25618 / H37Rv)</name>
    <dbReference type="NCBI Taxonomy" id="83332"/>
    <lineage>
        <taxon>Bacteria</taxon>
        <taxon>Bacillati</taxon>
        <taxon>Actinomycetota</taxon>
        <taxon>Actinomycetes</taxon>
        <taxon>Mycobacteriales</taxon>
        <taxon>Mycobacteriaceae</taxon>
        <taxon>Mycobacterium</taxon>
        <taxon>Mycobacterium tuberculosis complex</taxon>
    </lineage>
</organism>
<keyword id="KW-1185">Reference proteome</keyword>
<keyword id="KW-0732">Signal</keyword>
<proteinExistence type="evidence at protein level"/>
<evidence type="ECO:0000255" key="1"/>